<comment type="similarity">
    <text evidence="1">Belongs to the UPF0231 family.</text>
</comment>
<dbReference type="EMBL" id="CP000802">
    <property type="protein sequence ID" value="ABV04522.1"/>
    <property type="molecule type" value="Genomic_DNA"/>
</dbReference>
<dbReference type="RefSeq" id="WP_000384306.1">
    <property type="nucleotide sequence ID" value="NC_009800.1"/>
</dbReference>
<dbReference type="GeneID" id="93777317"/>
<dbReference type="KEGG" id="ecx:EcHS_A0123"/>
<dbReference type="HOGENOM" id="CLU_139226_0_0_6"/>
<dbReference type="HAMAP" id="MF_01053">
    <property type="entry name" value="UPF0231"/>
    <property type="match status" value="1"/>
</dbReference>
<dbReference type="InterPro" id="IPR008249">
    <property type="entry name" value="UPF0231"/>
</dbReference>
<dbReference type="NCBIfam" id="NF003574">
    <property type="entry name" value="PRK05248.1-1"/>
    <property type="match status" value="1"/>
</dbReference>
<dbReference type="NCBIfam" id="NF003576">
    <property type="entry name" value="PRK05248.1-3"/>
    <property type="match status" value="1"/>
</dbReference>
<dbReference type="Pfam" id="PF06062">
    <property type="entry name" value="UPF0231"/>
    <property type="match status" value="1"/>
</dbReference>
<dbReference type="PIRSF" id="PIRSF006287">
    <property type="entry name" value="UCP006287"/>
    <property type="match status" value="1"/>
</dbReference>
<feature type="chain" id="PRO_1000064358" description="UPF0231 protein YacL">
    <location>
        <begin position="1"/>
        <end position="120"/>
    </location>
</feature>
<protein>
    <recommendedName>
        <fullName evidence="1">UPF0231 protein YacL</fullName>
    </recommendedName>
</protein>
<reference key="1">
    <citation type="journal article" date="2008" name="J. Bacteriol.">
        <title>The pangenome structure of Escherichia coli: comparative genomic analysis of E. coli commensal and pathogenic isolates.</title>
        <authorList>
            <person name="Rasko D.A."/>
            <person name="Rosovitz M.J."/>
            <person name="Myers G.S.A."/>
            <person name="Mongodin E.F."/>
            <person name="Fricke W.F."/>
            <person name="Gajer P."/>
            <person name="Crabtree J."/>
            <person name="Sebaihia M."/>
            <person name="Thomson N.R."/>
            <person name="Chaudhuri R."/>
            <person name="Henderson I.R."/>
            <person name="Sperandio V."/>
            <person name="Ravel J."/>
        </authorList>
    </citation>
    <scope>NUCLEOTIDE SEQUENCE [LARGE SCALE GENOMIC DNA]</scope>
    <source>
        <strain>HS</strain>
    </source>
</reference>
<gene>
    <name evidence="1" type="primary">yacL</name>
    <name type="ordered locus">EcHS_A0123</name>
</gene>
<organism>
    <name type="scientific">Escherichia coli O9:H4 (strain HS)</name>
    <dbReference type="NCBI Taxonomy" id="331112"/>
    <lineage>
        <taxon>Bacteria</taxon>
        <taxon>Pseudomonadati</taxon>
        <taxon>Pseudomonadota</taxon>
        <taxon>Gammaproteobacteria</taxon>
        <taxon>Enterobacterales</taxon>
        <taxon>Enterobacteriaceae</taxon>
        <taxon>Escherichia</taxon>
    </lineage>
</organism>
<accession>A7ZW68</accession>
<sequence>MDYEFLRDITGVVKVRMSMGHEVVGHWFNEEVKENLALLDEVEQAAHALKGSERSWQRAGHEYTLWMDGEEVMVRANQLEFAGDEMEEGMNYYDEESLSLCGVEDFLQVVAAYRNFVQQK</sequence>
<proteinExistence type="inferred from homology"/>
<name>YACL_ECOHS</name>
<evidence type="ECO:0000255" key="1">
    <source>
        <dbReference type="HAMAP-Rule" id="MF_01053"/>
    </source>
</evidence>